<accession>Q0SGQ0</accession>
<evidence type="ECO:0000255" key="1">
    <source>
        <dbReference type="HAMAP-Rule" id="MF_00530"/>
    </source>
</evidence>
<reference key="1">
    <citation type="journal article" date="2006" name="Proc. Natl. Acad. Sci. U.S.A.">
        <title>The complete genome of Rhodococcus sp. RHA1 provides insights into a catabolic powerhouse.</title>
        <authorList>
            <person name="McLeod M.P."/>
            <person name="Warren R.L."/>
            <person name="Hsiao W.W.L."/>
            <person name="Araki N."/>
            <person name="Myhre M."/>
            <person name="Fernandes C."/>
            <person name="Miyazawa D."/>
            <person name="Wong W."/>
            <person name="Lillquist A.L."/>
            <person name="Wang D."/>
            <person name="Dosanjh M."/>
            <person name="Hara H."/>
            <person name="Petrescu A."/>
            <person name="Morin R.D."/>
            <person name="Yang G."/>
            <person name="Stott J.M."/>
            <person name="Schein J.E."/>
            <person name="Shin H."/>
            <person name="Smailus D."/>
            <person name="Siddiqui A.S."/>
            <person name="Marra M.A."/>
            <person name="Jones S.J.M."/>
            <person name="Holt R."/>
            <person name="Brinkman F.S.L."/>
            <person name="Miyauchi K."/>
            <person name="Fukuda M."/>
            <person name="Davies J.E."/>
            <person name="Mohn W.W."/>
            <person name="Eltis L.D."/>
        </authorList>
    </citation>
    <scope>NUCLEOTIDE SEQUENCE [LARGE SCALE GENOMIC DNA]</scope>
    <source>
        <strain>RHA1</strain>
    </source>
</reference>
<keyword id="KW-0066">ATP synthesis</keyword>
<keyword id="KW-1003">Cell membrane</keyword>
<keyword id="KW-0139">CF(1)</keyword>
<keyword id="KW-0375">Hydrogen ion transport</keyword>
<keyword id="KW-0406">Ion transport</keyword>
<keyword id="KW-0472">Membrane</keyword>
<keyword id="KW-0813">Transport</keyword>
<organism>
    <name type="scientific">Rhodococcus jostii (strain RHA1)</name>
    <dbReference type="NCBI Taxonomy" id="101510"/>
    <lineage>
        <taxon>Bacteria</taxon>
        <taxon>Bacillati</taxon>
        <taxon>Actinomycetota</taxon>
        <taxon>Actinomycetes</taxon>
        <taxon>Mycobacteriales</taxon>
        <taxon>Nocardiaceae</taxon>
        <taxon>Rhodococcus</taxon>
    </lineage>
</organism>
<gene>
    <name evidence="1" type="primary">atpC</name>
    <name type="ordered locus">RHA1_ro01471</name>
</gene>
<protein>
    <recommendedName>
        <fullName evidence="1">ATP synthase epsilon chain</fullName>
    </recommendedName>
    <alternativeName>
        <fullName evidence="1">ATP synthase F1 sector epsilon subunit</fullName>
    </alternativeName>
    <alternativeName>
        <fullName evidence="1">F-ATPase epsilon subunit</fullName>
    </alternativeName>
</protein>
<feature type="chain" id="PRO_0000265874" description="ATP synthase epsilon chain">
    <location>
        <begin position="1"/>
        <end position="122"/>
    </location>
</feature>
<proteinExistence type="inferred from homology"/>
<sequence length="122" mass="12522">MAEMTVELVAVERRLWSGSATLVSAQTTEGEIGVMPGHEPVLGQLVEAGVVAITTADGERIVAAVHGGFLSVTAKTVTILAESADLAEDIDVEAAKAVLAESGDDLEAIAVAKGRIRAVERA</sequence>
<comment type="function">
    <text evidence="1">Produces ATP from ADP in the presence of a proton gradient across the membrane.</text>
</comment>
<comment type="subunit">
    <text>F-type ATPases have 2 components, CF(1) - the catalytic core - and CF(0) - the membrane proton channel. CF(1) has five subunits: alpha(3), beta(3), gamma(1), delta(1), epsilon(1). CF(0) has three main subunits: a, b and c.</text>
</comment>
<comment type="subcellular location">
    <subcellularLocation>
        <location evidence="1">Cell membrane</location>
        <topology evidence="1">Peripheral membrane protein</topology>
    </subcellularLocation>
</comment>
<comment type="similarity">
    <text evidence="1">Belongs to the ATPase epsilon chain family.</text>
</comment>
<name>ATPE_RHOJR</name>
<dbReference type="EMBL" id="CP000431">
    <property type="protein sequence ID" value="ABG93286.1"/>
    <property type="molecule type" value="Genomic_DNA"/>
</dbReference>
<dbReference type="RefSeq" id="WP_005252961.1">
    <property type="nucleotide sequence ID" value="NC_008268.1"/>
</dbReference>
<dbReference type="SMR" id="Q0SGQ0"/>
<dbReference type="KEGG" id="rha:RHA1_ro01471"/>
<dbReference type="eggNOG" id="COG0355">
    <property type="taxonomic scope" value="Bacteria"/>
</dbReference>
<dbReference type="HOGENOM" id="CLU_084338_4_0_11"/>
<dbReference type="OrthoDB" id="9791445at2"/>
<dbReference type="Proteomes" id="UP000008710">
    <property type="component" value="Chromosome"/>
</dbReference>
<dbReference type="GO" id="GO:0005886">
    <property type="term" value="C:plasma membrane"/>
    <property type="evidence" value="ECO:0007669"/>
    <property type="project" value="UniProtKB-SubCell"/>
</dbReference>
<dbReference type="GO" id="GO:0045259">
    <property type="term" value="C:proton-transporting ATP synthase complex"/>
    <property type="evidence" value="ECO:0007669"/>
    <property type="project" value="UniProtKB-KW"/>
</dbReference>
<dbReference type="GO" id="GO:0005524">
    <property type="term" value="F:ATP binding"/>
    <property type="evidence" value="ECO:0007669"/>
    <property type="project" value="UniProtKB-UniRule"/>
</dbReference>
<dbReference type="GO" id="GO:0046933">
    <property type="term" value="F:proton-transporting ATP synthase activity, rotational mechanism"/>
    <property type="evidence" value="ECO:0007669"/>
    <property type="project" value="UniProtKB-UniRule"/>
</dbReference>
<dbReference type="CDD" id="cd12152">
    <property type="entry name" value="F1-ATPase_delta"/>
    <property type="match status" value="1"/>
</dbReference>
<dbReference type="Gene3D" id="2.60.15.10">
    <property type="entry name" value="F0F1 ATP synthase delta/epsilon subunit, N-terminal"/>
    <property type="match status" value="1"/>
</dbReference>
<dbReference type="HAMAP" id="MF_00530">
    <property type="entry name" value="ATP_synth_epsil_bac"/>
    <property type="match status" value="1"/>
</dbReference>
<dbReference type="InterPro" id="IPR001469">
    <property type="entry name" value="ATP_synth_F1_dsu/esu"/>
</dbReference>
<dbReference type="InterPro" id="IPR020546">
    <property type="entry name" value="ATP_synth_F1_dsu/esu_N"/>
</dbReference>
<dbReference type="InterPro" id="IPR036771">
    <property type="entry name" value="ATPsynth_dsu/esu_N"/>
</dbReference>
<dbReference type="NCBIfam" id="TIGR01216">
    <property type="entry name" value="ATP_synt_epsi"/>
    <property type="match status" value="1"/>
</dbReference>
<dbReference type="NCBIfam" id="NF001852">
    <property type="entry name" value="PRK00571.2-5"/>
    <property type="match status" value="1"/>
</dbReference>
<dbReference type="NCBIfam" id="NF009977">
    <property type="entry name" value="PRK13442.1"/>
    <property type="match status" value="1"/>
</dbReference>
<dbReference type="PANTHER" id="PTHR13822">
    <property type="entry name" value="ATP SYNTHASE DELTA/EPSILON CHAIN"/>
    <property type="match status" value="1"/>
</dbReference>
<dbReference type="PANTHER" id="PTHR13822:SF10">
    <property type="entry name" value="ATP SYNTHASE EPSILON CHAIN, CHLOROPLASTIC"/>
    <property type="match status" value="1"/>
</dbReference>
<dbReference type="Pfam" id="PF02823">
    <property type="entry name" value="ATP-synt_DE_N"/>
    <property type="match status" value="1"/>
</dbReference>
<dbReference type="SUPFAM" id="SSF51344">
    <property type="entry name" value="Epsilon subunit of F1F0-ATP synthase N-terminal domain"/>
    <property type="match status" value="1"/>
</dbReference>